<feature type="chain" id="PRO_0000051436" description="Protein transport protein SEC31">
    <location>
        <begin position="1"/>
        <end position="1273"/>
    </location>
</feature>
<feature type="repeat" description="WD 1">
    <location>
        <begin position="6"/>
        <end position="46"/>
    </location>
</feature>
<feature type="repeat" description="WD 2">
    <location>
        <begin position="60"/>
        <end position="99"/>
    </location>
</feature>
<feature type="repeat" description="WD 3">
    <location>
        <begin position="106"/>
        <end position="146"/>
    </location>
</feature>
<feature type="repeat" description="WD 4">
    <location>
        <begin position="158"/>
        <end position="198"/>
    </location>
</feature>
<feature type="repeat" description="WD 5">
    <location>
        <begin position="207"/>
        <end position="250"/>
    </location>
</feature>
<feature type="repeat" description="WD 6">
    <location>
        <begin position="255"/>
        <end position="295"/>
    </location>
</feature>
<feature type="repeat" description="WD 7">
    <location>
        <begin position="298"/>
        <end position="338"/>
    </location>
</feature>
<feature type="repeat" description="WD 8; interaction with SEC13">
    <location>
        <begin position="385"/>
        <end position="405"/>
    </location>
</feature>
<feature type="region of interest" description="Disordered" evidence="1">
    <location>
        <begin position="815"/>
        <end position="835"/>
    </location>
</feature>
<feature type="region of interest" description="Disordered" evidence="1">
    <location>
        <begin position="933"/>
        <end position="1162"/>
    </location>
</feature>
<feature type="compositionally biased region" description="Polar residues" evidence="1">
    <location>
        <begin position="994"/>
        <end position="1039"/>
    </location>
</feature>
<feature type="compositionally biased region" description="Polar residues" evidence="1">
    <location>
        <begin position="1071"/>
        <end position="1094"/>
    </location>
</feature>
<feature type="compositionally biased region" description="Pro residues" evidence="1">
    <location>
        <begin position="1095"/>
        <end position="1110"/>
    </location>
</feature>
<feature type="compositionally biased region" description="Polar residues" evidence="1">
    <location>
        <begin position="1118"/>
        <end position="1129"/>
    </location>
</feature>
<feature type="compositionally biased region" description="Low complexity" evidence="1">
    <location>
        <begin position="1130"/>
        <end position="1154"/>
    </location>
</feature>
<feature type="modified residue" description="Phosphoserine" evidence="20 21">
    <location>
        <position position="349"/>
    </location>
</feature>
<feature type="modified residue" description="Phosphoserine" evidence="20">
    <location>
        <position position="836"/>
    </location>
</feature>
<feature type="modified residue" description="Phosphoserine" evidence="21">
    <location>
        <position position="974"/>
    </location>
</feature>
<feature type="modified residue" description="Phosphoserine" evidence="21">
    <location>
        <position position="977"/>
    </location>
</feature>
<feature type="modified residue" description="Phosphoserine" evidence="20 21">
    <location>
        <position position="980"/>
    </location>
</feature>
<feature type="modified residue" description="Phosphoserine" evidence="21">
    <location>
        <position position="988"/>
    </location>
</feature>
<feature type="modified residue" description="Phosphoserine" evidence="19 20 21">
    <location>
        <position position="992"/>
    </location>
</feature>
<feature type="modified residue" description="Phosphoserine" evidence="19 20 21">
    <location>
        <position position="999"/>
    </location>
</feature>
<feature type="modified residue" description="Phosphothreonine" evidence="18 19 20 21">
    <location>
        <position position="1050"/>
    </location>
</feature>
<feature type="modified residue" description="Phosphoserine" evidence="20">
    <location>
        <position position="1053"/>
    </location>
</feature>
<feature type="sequence conflict" description="In Ref. 1; AAA50367." evidence="17" ref="1">
    <original>A</original>
    <variation>T</variation>
    <location>
        <position position="317"/>
    </location>
</feature>
<feature type="sequence conflict" description="In Ref. 2; CAA58252 and 3; CAA98772." evidence="17" ref="2 3">
    <original>T</original>
    <variation>S</variation>
    <location>
        <position position="367"/>
    </location>
</feature>
<feature type="sequence conflict" description="In Ref. 1; AAA50367." evidence="17" ref="1">
    <original>S</original>
    <variation>N</variation>
    <location>
        <position position="691"/>
    </location>
</feature>
<feature type="sequence conflict" description="In Ref. 1; AAA50367." evidence="17" ref="1">
    <original>A</original>
    <variation>V</variation>
    <location>
        <position position="754"/>
    </location>
</feature>
<feature type="sequence conflict" description="In Ref. 1; AAA50367." evidence="17" ref="1">
    <original>T</original>
    <variation>A</variation>
    <location>
        <position position="877"/>
    </location>
</feature>
<feature type="strand" evidence="23">
    <location>
        <begin position="6"/>
        <end position="10"/>
    </location>
</feature>
<feature type="strand" evidence="23">
    <location>
        <begin position="17"/>
        <end position="20"/>
    </location>
</feature>
<feature type="strand" evidence="23">
    <location>
        <begin position="22"/>
        <end position="26"/>
    </location>
</feature>
<feature type="strand" evidence="23">
    <location>
        <begin position="28"/>
        <end position="30"/>
    </location>
</feature>
<feature type="strand" evidence="23">
    <location>
        <begin position="43"/>
        <end position="49"/>
    </location>
</feature>
<feature type="helix" evidence="23">
    <location>
        <begin position="50"/>
        <end position="52"/>
    </location>
</feature>
<feature type="strand" evidence="23">
    <location>
        <begin position="65"/>
        <end position="70"/>
    </location>
</feature>
<feature type="strand" evidence="23">
    <location>
        <begin position="72"/>
        <end position="75"/>
    </location>
</feature>
<feature type="strand" evidence="23">
    <location>
        <begin position="77"/>
        <end position="84"/>
    </location>
</feature>
<feature type="strand" evidence="23">
    <location>
        <begin position="86"/>
        <end position="89"/>
    </location>
</feature>
<feature type="strand" evidence="23">
    <location>
        <begin position="100"/>
        <end position="103"/>
    </location>
</feature>
<feature type="strand" evidence="23">
    <location>
        <begin position="107"/>
        <end position="109"/>
    </location>
</feature>
<feature type="strand" evidence="23">
    <location>
        <begin position="113"/>
        <end position="116"/>
    </location>
</feature>
<feature type="strand" evidence="23">
    <location>
        <begin position="118"/>
        <end position="120"/>
    </location>
</feature>
<feature type="strand" evidence="23">
    <location>
        <begin position="123"/>
        <end position="127"/>
    </location>
</feature>
<feature type="strand" evidence="23">
    <location>
        <begin position="129"/>
        <end position="131"/>
    </location>
</feature>
<feature type="strand" evidence="23">
    <location>
        <begin position="133"/>
        <end position="135"/>
    </location>
</feature>
<feature type="turn" evidence="23">
    <location>
        <begin position="138"/>
        <end position="141"/>
    </location>
</feature>
<feature type="turn" evidence="23">
    <location>
        <begin position="145"/>
        <end position="147"/>
    </location>
</feature>
<feature type="strand" evidence="23">
    <location>
        <begin position="165"/>
        <end position="168"/>
    </location>
</feature>
<feature type="strand" evidence="23">
    <location>
        <begin position="175"/>
        <end position="183"/>
    </location>
</feature>
<feature type="strand" evidence="23">
    <location>
        <begin position="185"/>
        <end position="189"/>
    </location>
</feature>
<feature type="turn" evidence="23">
    <location>
        <begin position="190"/>
        <end position="193"/>
    </location>
</feature>
<feature type="strand" evidence="23">
    <location>
        <begin position="194"/>
        <end position="199"/>
    </location>
</feature>
<feature type="strand" evidence="23">
    <location>
        <begin position="212"/>
        <end position="217"/>
    </location>
</feature>
<feature type="strand" evidence="23">
    <location>
        <begin position="224"/>
        <end position="229"/>
    </location>
</feature>
<feature type="strand" evidence="23">
    <location>
        <begin position="232"/>
        <end position="234"/>
    </location>
</feature>
<feature type="strand" evidence="23">
    <location>
        <begin position="239"/>
        <end position="241"/>
    </location>
</feature>
<feature type="strand" evidence="23">
    <location>
        <begin position="260"/>
        <end position="265"/>
    </location>
</feature>
<feature type="strand" evidence="23">
    <location>
        <begin position="273"/>
        <end position="285"/>
    </location>
</feature>
<feature type="strand" evidence="23">
    <location>
        <begin position="287"/>
        <end position="289"/>
    </location>
</feature>
<feature type="strand" evidence="23">
    <location>
        <begin position="292"/>
        <end position="297"/>
    </location>
</feature>
<feature type="strand" evidence="23">
    <location>
        <begin position="299"/>
        <end position="301"/>
    </location>
</feature>
<feature type="strand" evidence="23">
    <location>
        <begin position="306"/>
        <end position="308"/>
    </location>
</feature>
<feature type="strand" evidence="23">
    <location>
        <begin position="315"/>
        <end position="318"/>
    </location>
</feature>
<feature type="strand" evidence="23">
    <location>
        <begin position="321"/>
        <end position="330"/>
    </location>
</feature>
<feature type="strand" evidence="22">
    <location>
        <begin position="385"/>
        <end position="387"/>
    </location>
</feature>
<feature type="turn" evidence="22">
    <location>
        <begin position="388"/>
        <end position="390"/>
    </location>
</feature>
<feature type="strand" evidence="22">
    <location>
        <begin position="391"/>
        <end position="395"/>
    </location>
</feature>
<feature type="strand" evidence="22">
    <location>
        <begin position="402"/>
        <end position="405"/>
    </location>
</feature>
<feature type="helix" evidence="22">
    <location>
        <begin position="416"/>
        <end position="424"/>
    </location>
</feature>
<feature type="helix" evidence="22">
    <location>
        <begin position="428"/>
        <end position="436"/>
    </location>
</feature>
<feature type="helix" evidence="22">
    <location>
        <begin position="441"/>
        <end position="456"/>
    </location>
</feature>
<feature type="helix" evidence="22">
    <location>
        <begin position="458"/>
        <end position="466"/>
    </location>
</feature>
<feature type="helix" evidence="22">
    <location>
        <begin position="509"/>
        <end position="519"/>
    </location>
</feature>
<feature type="helix" evidence="22">
    <location>
        <begin position="523"/>
        <end position="531"/>
    </location>
</feature>
<feature type="turn" evidence="22">
    <location>
        <begin position="532"/>
        <end position="534"/>
    </location>
</feature>
<feature type="helix" evidence="22">
    <location>
        <begin position="536"/>
        <end position="543"/>
    </location>
</feature>
<feature type="helix" evidence="22">
    <location>
        <begin position="549"/>
        <end position="563"/>
    </location>
</feature>
<feature type="helix" evidence="22">
    <location>
        <begin position="568"/>
        <end position="577"/>
    </location>
</feature>
<feature type="helix" evidence="22">
    <location>
        <begin position="582"/>
        <end position="587"/>
    </location>
</feature>
<feature type="helix" evidence="22">
    <location>
        <begin position="590"/>
        <end position="592"/>
    </location>
</feature>
<feature type="helix" evidence="22">
    <location>
        <begin position="593"/>
        <end position="603"/>
    </location>
</feature>
<feature type="helix" evidence="22">
    <location>
        <begin position="608"/>
        <end position="623"/>
    </location>
</feature>
<feature type="turn" evidence="22">
    <location>
        <begin position="624"/>
        <end position="626"/>
    </location>
</feature>
<feature type="helix" evidence="22">
    <location>
        <begin position="628"/>
        <end position="637"/>
    </location>
</feature>
<feature type="helix" evidence="22">
    <location>
        <begin position="641"/>
        <end position="650"/>
    </location>
</feature>
<feature type="helix" evidence="22">
    <location>
        <begin position="652"/>
        <end position="661"/>
    </location>
</feature>
<feature type="helix" evidence="22">
    <location>
        <begin position="666"/>
        <end position="685"/>
    </location>
</feature>
<feature type="helix" evidence="22">
    <location>
        <begin position="697"/>
        <end position="711"/>
    </location>
</feature>
<feature type="turn" evidence="22">
    <location>
        <begin position="712"/>
        <end position="714"/>
    </location>
</feature>
<feature type="helix" evidence="22">
    <location>
        <begin position="716"/>
        <end position="725"/>
    </location>
</feature>
<feature type="helix" evidence="22">
    <location>
        <begin position="731"/>
        <end position="744"/>
    </location>
</feature>
<feature type="strand" evidence="24">
    <location>
        <begin position="909"/>
        <end position="911"/>
    </location>
</feature>
<feature type="helix" evidence="24">
    <location>
        <begin position="916"/>
        <end position="919"/>
    </location>
</feature>
<proteinExistence type="evidence at protein level"/>
<organism>
    <name type="scientific">Saccharomyces cerevisiae (strain ATCC 204508 / S288c)</name>
    <name type="common">Baker's yeast</name>
    <dbReference type="NCBI Taxonomy" id="559292"/>
    <lineage>
        <taxon>Eukaryota</taxon>
        <taxon>Fungi</taxon>
        <taxon>Dikarya</taxon>
        <taxon>Ascomycota</taxon>
        <taxon>Saccharomycotina</taxon>
        <taxon>Saccharomycetes</taxon>
        <taxon>Saccharomycetales</taxon>
        <taxon>Saccharomycetaceae</taxon>
        <taxon>Saccharomyces</taxon>
    </lineage>
</organism>
<comment type="function">
    <text evidence="3 7 11 12 13 14">Component of the coat protein complex II (COPII) which promotes the formation of transport vesicles from the endoplasmic reticulum (ER). The coat has two main functions, the physical deformation of the endoplasmic reticulum membrane into vesicles and the selection of cargo molecules.</text>
</comment>
<comment type="subunit">
    <text evidence="2 4 5 8 9 10 14 15 16">The COPII coat is composed of at least 5 proteins: the SEC23/24 complex, the SEC13/31 complex, and the protein SAR1. SEC13 and SEC31 make a 2:2 tetramer that forms the edge element of the COPII outer coat. The tetramer self-assembles in multiple copies to form the complete polyhedral cage. Interacts (via WD 8) with SEC13. Interacts with EMP24, ERV25, SEC16 and SHR3.</text>
</comment>
<comment type="interaction">
    <interactant intactId="EBI-20524">
        <id>P38968</id>
    </interactant>
    <interactant intactId="EBI-16529">
        <id>Q04491</id>
        <label>SEC13</label>
    </interactant>
    <organismsDiffer>false</organismsDiffer>
    <experiments>7</experiments>
</comment>
<comment type="interaction">
    <interactant intactId="EBI-20524">
        <id>P38968</id>
    </interactant>
    <interactant intactId="EBI-16551">
        <id>P48415</id>
        <label>SEC16</label>
    </interactant>
    <organismsDiffer>false</organismsDiffer>
    <experiments>3</experiments>
</comment>
<comment type="interaction">
    <interactant intactId="EBI-20524">
        <id>P38968</id>
    </interactant>
    <interactant intactId="EBI-16584">
        <id>P15303</id>
        <label>SEC23</label>
    </interactant>
    <organismsDiffer>false</organismsDiffer>
    <experiments>3</experiments>
</comment>
<comment type="interaction">
    <interactant intactId="EBI-20524">
        <id>P38968</id>
    </interactant>
    <interactant intactId="EBI-16592">
        <id>P40482</id>
        <label>SEC24</label>
    </interactant>
    <organismsDiffer>false</organismsDiffer>
    <experiments>4</experiments>
</comment>
<comment type="subcellular location">
    <subcellularLocation>
        <location>Cytoplasmic vesicle</location>
        <location>COPII-coated vesicle membrane</location>
        <topology>Peripheral membrane protein</topology>
        <orientation>Cytoplasmic side</orientation>
    </subcellularLocation>
    <subcellularLocation>
        <location>Endoplasmic reticulum membrane</location>
        <topology>Peripheral membrane protein</topology>
        <orientation>Cytoplasmic side</orientation>
    </subcellularLocation>
</comment>
<comment type="miscellaneous">
    <text evidence="6">Present with 1840 molecules/cell in log phase SD medium.</text>
</comment>
<comment type="similarity">
    <text evidence="17">Belongs to the WD repeat SEC31 family.</text>
</comment>
<dbReference type="EMBL" id="U15219">
    <property type="protein sequence ID" value="AAA50367.1"/>
    <property type="molecule type" value="Genomic_DNA"/>
</dbReference>
<dbReference type="EMBL" id="X83276">
    <property type="protein sequence ID" value="CAA58252.1"/>
    <property type="molecule type" value="Genomic_DNA"/>
</dbReference>
<dbReference type="EMBL" id="Z74243">
    <property type="protein sequence ID" value="CAA98772.1"/>
    <property type="molecule type" value="Genomic_DNA"/>
</dbReference>
<dbReference type="EMBL" id="BK006938">
    <property type="protein sequence ID" value="DAA11668.2"/>
    <property type="molecule type" value="Genomic_DNA"/>
</dbReference>
<dbReference type="PIR" id="S58782">
    <property type="entry name" value="S58782"/>
</dbReference>
<dbReference type="RefSeq" id="NP_010086.2">
    <property type="nucleotide sequence ID" value="NM_001180255.2"/>
</dbReference>
<dbReference type="PDB" id="2PM6">
    <property type="method" value="X-ray"/>
    <property type="resolution" value="2.45 A"/>
    <property type="chains" value="A/C=370-763"/>
</dbReference>
<dbReference type="PDB" id="2PM7">
    <property type="method" value="X-ray"/>
    <property type="resolution" value="2.35 A"/>
    <property type="chains" value="A/C=370-763"/>
</dbReference>
<dbReference type="PDB" id="2PM9">
    <property type="method" value="X-ray"/>
    <property type="resolution" value="3.30 A"/>
    <property type="chains" value="A=1-411"/>
</dbReference>
<dbReference type="PDB" id="2QTV">
    <property type="method" value="X-ray"/>
    <property type="resolution" value="2.50 A"/>
    <property type="chains" value="D=899-947"/>
</dbReference>
<dbReference type="PDB" id="3MZL">
    <property type="method" value="X-ray"/>
    <property type="resolution" value="2.80 A"/>
    <property type="chains" value="B/D/F/H=370-746"/>
</dbReference>
<dbReference type="PDB" id="4BZJ">
    <property type="method" value="EM"/>
    <property type="resolution" value="40.00 A"/>
    <property type="chains" value="A/C=1-1273"/>
</dbReference>
<dbReference type="PDB" id="4BZK">
    <property type="method" value="EM"/>
    <property type="resolution" value="40.00 A"/>
    <property type="chains" value="A/C=1-1273"/>
</dbReference>
<dbReference type="PDB" id="6ZG5">
    <property type="method" value="EM"/>
    <property type="resolution" value="40.00 A"/>
    <property type="chains" value="A/C=1-1273"/>
</dbReference>
<dbReference type="PDB" id="6ZG6">
    <property type="method" value="EM"/>
    <property type="resolution" value="40.00 A"/>
    <property type="chains" value="A/C/E/G=1-1273"/>
</dbReference>
<dbReference type="PDB" id="6ZL0">
    <property type="method" value="EM"/>
    <property type="resolution" value="40.00 A"/>
    <property type="chains" value="A/C=1-1273"/>
</dbReference>
<dbReference type="PDBsum" id="2PM6"/>
<dbReference type="PDBsum" id="2PM7"/>
<dbReference type="PDBsum" id="2PM9"/>
<dbReference type="PDBsum" id="2QTV"/>
<dbReference type="PDBsum" id="3MZL"/>
<dbReference type="PDBsum" id="4BZJ"/>
<dbReference type="PDBsum" id="4BZK"/>
<dbReference type="PDBsum" id="6ZG5"/>
<dbReference type="PDBsum" id="6ZG6"/>
<dbReference type="PDBsum" id="6ZL0"/>
<dbReference type="EMDB" id="EMD-11193"/>
<dbReference type="EMDB" id="EMD-11194"/>
<dbReference type="EMDB" id="EMD-11197"/>
<dbReference type="EMDB" id="EMD-11198"/>
<dbReference type="EMDB" id="EMD-11264"/>
<dbReference type="SMR" id="P38968"/>
<dbReference type="BioGRID" id="31850">
    <property type="interactions" value="268"/>
</dbReference>
<dbReference type="ComplexPortal" id="CPX-2523">
    <property type="entry name" value="COPII vesicle coat complex"/>
</dbReference>
<dbReference type="DIP" id="DIP-4792N"/>
<dbReference type="FunCoup" id="P38968">
    <property type="interactions" value="871"/>
</dbReference>
<dbReference type="IntAct" id="P38968">
    <property type="interactions" value="57"/>
</dbReference>
<dbReference type="MINT" id="P38968"/>
<dbReference type="STRING" id="4932.YDL195W"/>
<dbReference type="GlyGen" id="P38968">
    <property type="glycosylation" value="6 sites, 1 O-linked glycan (5 sites)"/>
</dbReference>
<dbReference type="iPTMnet" id="P38968"/>
<dbReference type="PaxDb" id="4932-YDL195W"/>
<dbReference type="PeptideAtlas" id="P38968"/>
<dbReference type="EnsemblFungi" id="YDL195W_mRNA">
    <property type="protein sequence ID" value="YDL195W"/>
    <property type="gene ID" value="YDL195W"/>
</dbReference>
<dbReference type="GeneID" id="851332"/>
<dbReference type="KEGG" id="sce:YDL195W"/>
<dbReference type="AGR" id="SGD:S000002354"/>
<dbReference type="SGD" id="S000002354">
    <property type="gene designation" value="SEC31"/>
</dbReference>
<dbReference type="VEuPathDB" id="FungiDB:YDL195W"/>
<dbReference type="eggNOG" id="KOG0307">
    <property type="taxonomic scope" value="Eukaryota"/>
</dbReference>
<dbReference type="GeneTree" id="ENSGT00390000003175"/>
<dbReference type="HOGENOM" id="CLU_003033_2_0_1"/>
<dbReference type="InParanoid" id="P38968"/>
<dbReference type="OMA" id="AQWAFGG"/>
<dbReference type="OrthoDB" id="542917at2759"/>
<dbReference type="BioCyc" id="YEAST:G3O-29580-MONOMER"/>
<dbReference type="Reactome" id="R-SCE-204005">
    <property type="pathway name" value="COPII-mediated vesicle transport"/>
</dbReference>
<dbReference type="BioGRID-ORCS" id="851332">
    <property type="hits" value="4 hits in 10 CRISPR screens"/>
</dbReference>
<dbReference type="EvolutionaryTrace" id="P38968"/>
<dbReference type="PRO" id="PR:P38968"/>
<dbReference type="Proteomes" id="UP000002311">
    <property type="component" value="Chromosome IV"/>
</dbReference>
<dbReference type="RNAct" id="P38968">
    <property type="molecule type" value="protein"/>
</dbReference>
<dbReference type="GO" id="GO:0030127">
    <property type="term" value="C:COPII vesicle coat"/>
    <property type="evidence" value="ECO:0000314"/>
    <property type="project" value="SGD"/>
</dbReference>
<dbReference type="GO" id="GO:0005783">
    <property type="term" value="C:endoplasmic reticulum"/>
    <property type="evidence" value="ECO:0000314"/>
    <property type="project" value="ComplexPortal"/>
</dbReference>
<dbReference type="GO" id="GO:0070971">
    <property type="term" value="C:endoplasmic reticulum exit site"/>
    <property type="evidence" value="ECO:0000318"/>
    <property type="project" value="GO_Central"/>
</dbReference>
<dbReference type="GO" id="GO:0005789">
    <property type="term" value="C:endoplasmic reticulum membrane"/>
    <property type="evidence" value="ECO:0007669"/>
    <property type="project" value="UniProtKB-SubCell"/>
</dbReference>
<dbReference type="GO" id="GO:0043332">
    <property type="term" value="C:mating projection tip"/>
    <property type="evidence" value="ECO:0007005"/>
    <property type="project" value="SGD"/>
</dbReference>
<dbReference type="GO" id="GO:0005198">
    <property type="term" value="F:structural molecule activity"/>
    <property type="evidence" value="ECO:0000314"/>
    <property type="project" value="SGD"/>
</dbReference>
<dbReference type="GO" id="GO:0090114">
    <property type="term" value="P:COPII-coated vesicle budding"/>
    <property type="evidence" value="ECO:0000314"/>
    <property type="project" value="SGD"/>
</dbReference>
<dbReference type="GO" id="GO:0090110">
    <property type="term" value="P:COPII-coated vesicle cargo loading"/>
    <property type="evidence" value="ECO:0000318"/>
    <property type="project" value="GO_Central"/>
</dbReference>
<dbReference type="GO" id="GO:0007029">
    <property type="term" value="P:endoplasmic reticulum organization"/>
    <property type="evidence" value="ECO:0000318"/>
    <property type="project" value="GO_Central"/>
</dbReference>
<dbReference type="GO" id="GO:1902953">
    <property type="term" value="P:positive regulation of ER to Golgi vesicle-mediated transport"/>
    <property type="evidence" value="ECO:0000314"/>
    <property type="project" value="ComplexPortal"/>
</dbReference>
<dbReference type="GO" id="GO:0070863">
    <property type="term" value="P:positive regulation of protein exit from endoplasmic reticulum"/>
    <property type="evidence" value="ECO:0000314"/>
    <property type="project" value="ComplexPortal"/>
</dbReference>
<dbReference type="GO" id="GO:0015031">
    <property type="term" value="P:protein transport"/>
    <property type="evidence" value="ECO:0007669"/>
    <property type="project" value="UniProtKB-KW"/>
</dbReference>
<dbReference type="DisProt" id="DP01840"/>
<dbReference type="FunFam" id="1.20.940.10:FF:000012">
    <property type="entry name" value="Protein transport protein SEC31"/>
    <property type="match status" value="1"/>
</dbReference>
<dbReference type="FunFam" id="1.25.40.980:FF:000001">
    <property type="entry name" value="Protein transport protein SEC31"/>
    <property type="match status" value="1"/>
</dbReference>
<dbReference type="FunFam" id="2.130.10.10:FF:000945">
    <property type="entry name" value="Protein transport protein SEC31"/>
    <property type="match status" value="1"/>
</dbReference>
<dbReference type="FunFam" id="2.20.25.400:FF:000001">
    <property type="entry name" value="Protein transport protein SEC31"/>
    <property type="match status" value="1"/>
</dbReference>
<dbReference type="Gene3D" id="1.25.40.980">
    <property type="match status" value="1"/>
</dbReference>
<dbReference type="Gene3D" id="2.20.25.400">
    <property type="match status" value="1"/>
</dbReference>
<dbReference type="Gene3D" id="6.10.140.1600">
    <property type="match status" value="1"/>
</dbReference>
<dbReference type="Gene3D" id="1.20.940.10">
    <property type="entry name" value="Functional domain of the splicing factor Prp18"/>
    <property type="match status" value="1"/>
</dbReference>
<dbReference type="Gene3D" id="2.130.10.10">
    <property type="entry name" value="YVTN repeat-like/Quinoprotein amine dehydrogenase"/>
    <property type="match status" value="1"/>
</dbReference>
<dbReference type="InterPro" id="IPR024298">
    <property type="entry name" value="Sec16_Sec23-bd"/>
</dbReference>
<dbReference type="InterPro" id="IPR021614">
    <property type="entry name" value="Sec31"/>
</dbReference>
<dbReference type="InterPro" id="IPR040251">
    <property type="entry name" value="SEC31-like"/>
</dbReference>
<dbReference type="InterPro" id="IPR009917">
    <property type="entry name" value="SRA1/Sec31"/>
</dbReference>
<dbReference type="InterPro" id="IPR015943">
    <property type="entry name" value="WD40/YVTN_repeat-like_dom_sf"/>
</dbReference>
<dbReference type="InterPro" id="IPR019775">
    <property type="entry name" value="WD40_repeat_CS"/>
</dbReference>
<dbReference type="InterPro" id="IPR036322">
    <property type="entry name" value="WD40_repeat_dom_sf"/>
</dbReference>
<dbReference type="InterPro" id="IPR001680">
    <property type="entry name" value="WD40_rpt"/>
</dbReference>
<dbReference type="PANTHER" id="PTHR13923">
    <property type="entry name" value="SEC31-RELATED PROTEIN"/>
    <property type="match status" value="1"/>
</dbReference>
<dbReference type="PANTHER" id="PTHR13923:SF11">
    <property type="entry name" value="SECRETORY 31, ISOFORM D"/>
    <property type="match status" value="1"/>
</dbReference>
<dbReference type="Pfam" id="PF11549">
    <property type="entry name" value="Sec31"/>
    <property type="match status" value="1"/>
</dbReference>
<dbReference type="Pfam" id="PF07304">
    <property type="entry name" value="SRA1"/>
    <property type="match status" value="1"/>
</dbReference>
<dbReference type="Pfam" id="PF12931">
    <property type="entry name" value="TPR_Sec16"/>
    <property type="match status" value="1"/>
</dbReference>
<dbReference type="Pfam" id="PF00400">
    <property type="entry name" value="WD40"/>
    <property type="match status" value="2"/>
</dbReference>
<dbReference type="SMART" id="SM00320">
    <property type="entry name" value="WD40"/>
    <property type="match status" value="6"/>
</dbReference>
<dbReference type="SUPFAM" id="SSF50978">
    <property type="entry name" value="WD40 repeat-like"/>
    <property type="match status" value="1"/>
</dbReference>
<dbReference type="PROSITE" id="PS00678">
    <property type="entry name" value="WD_REPEATS_1"/>
    <property type="match status" value="2"/>
</dbReference>
<dbReference type="PROSITE" id="PS50082">
    <property type="entry name" value="WD_REPEATS_2"/>
    <property type="match status" value="2"/>
</dbReference>
<dbReference type="PROSITE" id="PS50294">
    <property type="entry name" value="WD_REPEATS_REGION"/>
    <property type="match status" value="1"/>
</dbReference>
<keyword id="KW-0002">3D-structure</keyword>
<keyword id="KW-0968">Cytoplasmic vesicle</keyword>
<keyword id="KW-0256">Endoplasmic reticulum</keyword>
<keyword id="KW-0931">ER-Golgi transport</keyword>
<keyword id="KW-0472">Membrane</keyword>
<keyword id="KW-0597">Phosphoprotein</keyword>
<keyword id="KW-0653">Protein transport</keyword>
<keyword id="KW-1185">Reference proteome</keyword>
<keyword id="KW-0677">Repeat</keyword>
<keyword id="KW-0813">Transport</keyword>
<keyword id="KW-0853">WD repeat</keyword>
<accession>P38968</accession>
<accession>D6VRF8</accession>
<reference key="1">
    <citation type="journal article" date="1995" name="Mol. Cell. Biol.">
        <title>Suppression of mutations in two Saccharomyces cerevisiae genes by the adenovirus E1A protein.</title>
        <authorList>
            <person name="Zieler H.A."/>
            <person name="Walberg M."/>
            <person name="Berg P."/>
        </authorList>
    </citation>
    <scope>NUCLEOTIDE SEQUENCE [GENOMIC DNA]</scope>
    <source>
        <strain>S288c / SNY243</strain>
    </source>
</reference>
<reference key="2">
    <citation type="journal article" date="1996" name="Yeast">
        <title>The sequence of 23 kb surrounding the SNF3 locus on the left arm of yeast chromosome IV reveals the location of five known genes and characterizes at least six new open reading frames including putative genes for ribosomal protein L35 and a sugar transport protein.</title>
        <authorList>
            <person name="Verhasselt P."/>
            <person name="Voet M."/>
            <person name="Mathys J."/>
            <person name="Volckaert G."/>
        </authorList>
    </citation>
    <scope>NUCLEOTIDE SEQUENCE [GENOMIC DNA]</scope>
    <source>
        <strain>ATCC 96604 / S288c / FY1679</strain>
    </source>
</reference>
<reference key="3">
    <citation type="journal article" date="1997" name="Nature">
        <title>The nucleotide sequence of Saccharomyces cerevisiae chromosome IV.</title>
        <authorList>
            <person name="Jacq C."/>
            <person name="Alt-Moerbe J."/>
            <person name="Andre B."/>
            <person name="Arnold W."/>
            <person name="Bahr A."/>
            <person name="Ballesta J.P.G."/>
            <person name="Bargues M."/>
            <person name="Baron L."/>
            <person name="Becker A."/>
            <person name="Biteau N."/>
            <person name="Bloecker H."/>
            <person name="Blugeon C."/>
            <person name="Boskovic J."/>
            <person name="Brandt P."/>
            <person name="Brueckner M."/>
            <person name="Buitrago M.J."/>
            <person name="Coster F."/>
            <person name="Delaveau T."/>
            <person name="del Rey F."/>
            <person name="Dujon B."/>
            <person name="Eide L.G."/>
            <person name="Garcia-Cantalejo J.M."/>
            <person name="Goffeau A."/>
            <person name="Gomez-Peris A."/>
            <person name="Granotier C."/>
            <person name="Hanemann V."/>
            <person name="Hankeln T."/>
            <person name="Hoheisel J.D."/>
            <person name="Jaeger W."/>
            <person name="Jimenez A."/>
            <person name="Jonniaux J.-L."/>
            <person name="Kraemer C."/>
            <person name="Kuester H."/>
            <person name="Laamanen P."/>
            <person name="Legros Y."/>
            <person name="Louis E.J."/>
            <person name="Moeller-Rieker S."/>
            <person name="Monnet A."/>
            <person name="Moro M."/>
            <person name="Mueller-Auer S."/>
            <person name="Nussbaumer B."/>
            <person name="Paricio N."/>
            <person name="Paulin L."/>
            <person name="Perea J."/>
            <person name="Perez-Alonso M."/>
            <person name="Perez-Ortin J.E."/>
            <person name="Pohl T.M."/>
            <person name="Prydz H."/>
            <person name="Purnelle B."/>
            <person name="Rasmussen S.W."/>
            <person name="Remacha M.A."/>
            <person name="Revuelta J.L."/>
            <person name="Rieger M."/>
            <person name="Salom D."/>
            <person name="Saluz H.P."/>
            <person name="Saiz J.E."/>
            <person name="Saren A.-M."/>
            <person name="Schaefer M."/>
            <person name="Scharfe M."/>
            <person name="Schmidt E.R."/>
            <person name="Schneider C."/>
            <person name="Scholler P."/>
            <person name="Schwarz S."/>
            <person name="Soler-Mira A."/>
            <person name="Urrestarazu L.A."/>
            <person name="Verhasselt P."/>
            <person name="Vissers S."/>
            <person name="Voet M."/>
            <person name="Volckaert G."/>
            <person name="Wagner G."/>
            <person name="Wambutt R."/>
            <person name="Wedler E."/>
            <person name="Wedler H."/>
            <person name="Woelfl S."/>
            <person name="Harris D.E."/>
            <person name="Bowman S."/>
            <person name="Brown D."/>
            <person name="Churcher C.M."/>
            <person name="Connor R."/>
            <person name="Dedman K."/>
            <person name="Gentles S."/>
            <person name="Hamlin N."/>
            <person name="Hunt S."/>
            <person name="Jones L."/>
            <person name="McDonald S."/>
            <person name="Murphy L.D."/>
            <person name="Niblett D."/>
            <person name="Odell C."/>
            <person name="Oliver K."/>
            <person name="Rajandream M.A."/>
            <person name="Richards C."/>
            <person name="Shore L."/>
            <person name="Walsh S.V."/>
            <person name="Barrell B.G."/>
            <person name="Dietrich F.S."/>
            <person name="Mulligan J.T."/>
            <person name="Allen E."/>
            <person name="Araujo R."/>
            <person name="Aviles E."/>
            <person name="Berno A."/>
            <person name="Carpenter J."/>
            <person name="Chen E."/>
            <person name="Cherry J.M."/>
            <person name="Chung E."/>
            <person name="Duncan M."/>
            <person name="Hunicke-Smith S."/>
            <person name="Hyman R.W."/>
            <person name="Komp C."/>
            <person name="Lashkari D."/>
            <person name="Lew H."/>
            <person name="Lin D."/>
            <person name="Mosedale D."/>
            <person name="Nakahara K."/>
            <person name="Namath A."/>
            <person name="Oefner P."/>
            <person name="Oh C."/>
            <person name="Petel F.X."/>
            <person name="Roberts D."/>
            <person name="Schramm S."/>
            <person name="Schroeder M."/>
            <person name="Shogren T."/>
            <person name="Shroff N."/>
            <person name="Winant A."/>
            <person name="Yelton M.A."/>
            <person name="Botstein D."/>
            <person name="Davis R.W."/>
            <person name="Johnston M."/>
            <person name="Andrews S."/>
            <person name="Brinkman R."/>
            <person name="Cooper J."/>
            <person name="Ding H."/>
            <person name="Du Z."/>
            <person name="Favello A."/>
            <person name="Fulton L."/>
            <person name="Gattung S."/>
            <person name="Greco T."/>
            <person name="Hallsworth K."/>
            <person name="Hawkins J."/>
            <person name="Hillier L.W."/>
            <person name="Jier M."/>
            <person name="Johnson D."/>
            <person name="Johnston L."/>
            <person name="Kirsten J."/>
            <person name="Kucaba T."/>
            <person name="Langston Y."/>
            <person name="Latreille P."/>
            <person name="Le T."/>
            <person name="Mardis E."/>
            <person name="Menezes S."/>
            <person name="Miller N."/>
            <person name="Nhan M."/>
            <person name="Pauley A."/>
            <person name="Peluso D."/>
            <person name="Rifkin L."/>
            <person name="Riles L."/>
            <person name="Taich A."/>
            <person name="Trevaskis E."/>
            <person name="Vignati D."/>
            <person name="Wilcox L."/>
            <person name="Wohldman P."/>
            <person name="Vaudin M."/>
            <person name="Wilson R."/>
            <person name="Waterston R."/>
            <person name="Albermann K."/>
            <person name="Hani J."/>
            <person name="Heumann K."/>
            <person name="Kleine K."/>
            <person name="Mewes H.-W."/>
            <person name="Zollner A."/>
            <person name="Zaccaria P."/>
        </authorList>
    </citation>
    <scope>NUCLEOTIDE SEQUENCE [LARGE SCALE GENOMIC DNA]</scope>
    <source>
        <strain>ATCC 204508 / S288c</strain>
    </source>
</reference>
<reference key="4">
    <citation type="journal article" date="2014" name="G3 (Bethesda)">
        <title>The reference genome sequence of Saccharomyces cerevisiae: Then and now.</title>
        <authorList>
            <person name="Engel S.R."/>
            <person name="Dietrich F.S."/>
            <person name="Fisk D.G."/>
            <person name="Binkley G."/>
            <person name="Balakrishnan R."/>
            <person name="Costanzo M.C."/>
            <person name="Dwight S.S."/>
            <person name="Hitz B.C."/>
            <person name="Karra K."/>
            <person name="Nash R.S."/>
            <person name="Weng S."/>
            <person name="Wong E.D."/>
            <person name="Lloyd P."/>
            <person name="Skrzypek M.S."/>
            <person name="Miyasato S.R."/>
            <person name="Simison M."/>
            <person name="Cherry J.M."/>
        </authorList>
    </citation>
    <scope>GENOME REANNOTATION</scope>
    <scope>SEQUENCE REVISION TO 367</scope>
    <source>
        <strain>ATCC 204508 / S288c</strain>
    </source>
</reference>
<reference key="5">
    <citation type="journal article" date="1995" name="Cell">
        <title>COPI- and COPII-coated vesicles bud directly from the endoplasmic reticulum in yeast.</title>
        <authorList>
            <person name="Bednarek S.Y."/>
            <person name="Ravazzola M."/>
            <person name="Hosobuchi M."/>
            <person name="Amherdt M."/>
            <person name="Perrelet A."/>
            <person name="Schekman R.W."/>
            <person name="Orci L."/>
        </authorList>
    </citation>
    <scope>FUNCTION</scope>
    <scope>SUBCELLULAR LOCATION</scope>
</reference>
<reference key="6">
    <citation type="journal article" date="1996" name="Genetics">
        <title>New mutants of Saccharomyces cerevisiae affected in the transport of proteins from the endoplasmic reticulum to the Golgi complex.</title>
        <authorList>
            <person name="Wuestehube L.J."/>
            <person name="Duden R."/>
            <person name="Eun A."/>
            <person name="Hamamoto S."/>
            <person name="Korn P."/>
            <person name="Ram R."/>
            <person name="Schekman R.W."/>
        </authorList>
    </citation>
    <scope>FUNCTION</scope>
</reference>
<reference key="7">
    <citation type="journal article" date="1997" name="J. Biol. Chem.">
        <title>COPII subunit interactions in the assembly of the vesicle coat.</title>
        <authorList>
            <person name="Shaywitz D.A."/>
            <person name="Espenshade P.J."/>
            <person name="Gimeno R.E."/>
            <person name="Kaiser C.A."/>
        </authorList>
    </citation>
    <scope>IDENTIFICATION IN THE COPII COAT</scope>
    <scope>INTERACTION WITH SEC16</scope>
</reference>
<reference key="8">
    <citation type="journal article" date="1997" name="Mol. Biol. Cell">
        <title>Sec31 encodes an essential component of the COPII coat required for transport vesicle budding from the endoplasmic reticulum.</title>
        <authorList>
            <person name="Salama N.R."/>
            <person name="Chuang J.S."/>
            <person name="Schekman R.W."/>
        </authorList>
    </citation>
    <scope>FUNCTION</scope>
    <scope>PHOSPHORYLATION</scope>
    <scope>INTERACTION WITH SEC13</scope>
</reference>
<reference key="9">
    <citation type="journal article" date="1997" name="Proc. Natl. Acad. Sci. U.S.A.">
        <title>Selective packaging of cargo molecules into endoplasmic reticulum-derived COPII vesicles.</title>
        <authorList>
            <person name="Campbell J.L."/>
            <person name="Schekman R.W."/>
        </authorList>
    </citation>
    <scope>FUNCTION</scope>
</reference>
<reference key="10">
    <citation type="journal article" date="1998" name="Cell">
        <title>COPII-coated vesicle formation reconstituted with purified coat proteins and chemically defined liposomes.</title>
        <authorList>
            <person name="Matsuoka K."/>
            <person name="Orci L."/>
            <person name="Amherdt M."/>
            <person name="Bednarek S.Y."/>
            <person name="Hamamoto S."/>
            <person name="Schekman R.W."/>
            <person name="Yeung T."/>
        </authorList>
    </citation>
    <scope>SUBUNIT</scope>
    <scope>SUBCELLULAR LOCATION</scope>
</reference>
<reference key="11">
    <citation type="journal article" date="1999" name="Mol. Biol. Cell">
        <title>Shr3p mediates specific COPII coatomer-cargo interactions required for the packaging of amino acid permeases into ER-derived transport vesicles.</title>
        <authorList>
            <person name="Gilstring C.F."/>
            <person name="Melin-Larsson M."/>
            <person name="Ljungdahl P.O."/>
        </authorList>
    </citation>
    <scope>INTERACTION WITH SHR3</scope>
</reference>
<reference key="12">
    <citation type="journal article" date="2000" name="Methods">
        <title>The use of liposomes to study COPII- and COPI-coated vesicle formation and membrane protein sorting.</title>
        <authorList>
            <person name="Matsuoka K."/>
            <person name="Schekman R.W."/>
        </authorList>
    </citation>
    <scope>FUNCTION</scope>
    <scope>SUBCELLULAR LOCATION</scope>
</reference>
<reference key="13">
    <citation type="journal article" date="2001" name="J. Biol. Chem.">
        <title>Distinct roles for the cytoplasmic tail sequences of Emp24p and Erv25p in transport between the endoplasmic reticulum and Golgi complex.</title>
        <authorList>
            <person name="Belden W.J."/>
            <person name="Barlowe C."/>
        </authorList>
    </citation>
    <scope>INTERACTION WITH EMP24 AND ERV25</scope>
</reference>
<reference key="14">
    <citation type="journal article" date="2001" name="Nat. Cell Biol.">
        <title>Dynamics of the COPII coat with GTP and stable analogues.</title>
        <authorList>
            <person name="Antonny B."/>
            <person name="Madden D.T."/>
            <person name="Hamamoto S."/>
            <person name="Orci L."/>
            <person name="Schekman R.W."/>
        </authorList>
    </citation>
    <scope>IDENTIFICATION IN THE COPII COAT</scope>
</reference>
<reference key="15">
    <citation type="journal article" date="2005" name="Mol. Cell. Proteomics">
        <title>Quantitative phosphoproteomics applied to the yeast pheromone signaling pathway.</title>
        <authorList>
            <person name="Gruhler A."/>
            <person name="Olsen J.V."/>
            <person name="Mohammed S."/>
            <person name="Mortensen P."/>
            <person name="Faergeman N.J."/>
            <person name="Mann M."/>
            <person name="Jensen O.N."/>
        </authorList>
    </citation>
    <scope>PHOSPHORYLATION [LARGE SCALE ANALYSIS] AT THR-1050</scope>
    <scope>IDENTIFICATION BY MASS SPECTROMETRY [LARGE SCALE ANALYSIS]</scope>
    <source>
        <strain>YAL6B</strain>
    </source>
</reference>
<reference key="16">
    <citation type="journal article" date="2007" name="J. Proteome Res.">
        <title>Large-scale phosphorylation analysis of alpha-factor-arrested Saccharomyces cerevisiae.</title>
        <authorList>
            <person name="Li X."/>
            <person name="Gerber S.A."/>
            <person name="Rudner A.D."/>
            <person name="Beausoleil S.A."/>
            <person name="Haas W."/>
            <person name="Villen J."/>
            <person name="Elias J.E."/>
            <person name="Gygi S.P."/>
        </authorList>
    </citation>
    <scope>PHOSPHORYLATION [LARGE SCALE ANALYSIS] AT SER-992; SER-999 AND THR-1050</scope>
    <scope>IDENTIFICATION BY MASS SPECTROMETRY [LARGE SCALE ANALYSIS]</scope>
    <source>
        <strain>ADR376</strain>
    </source>
</reference>
<reference key="17">
    <citation type="journal article" date="2008" name="Mol. Cell. Proteomics">
        <title>A multidimensional chromatography technology for in-depth phosphoproteome analysis.</title>
        <authorList>
            <person name="Albuquerque C.P."/>
            <person name="Smolka M.B."/>
            <person name="Payne S.H."/>
            <person name="Bafna V."/>
            <person name="Eng J."/>
            <person name="Zhou H."/>
        </authorList>
    </citation>
    <scope>PHOSPHORYLATION [LARGE SCALE ANALYSIS] AT SER-349; SER-836; SER-980; SER-992; SER-999; THR-1050 AND SER-1053</scope>
    <scope>IDENTIFICATION BY MASS SPECTROMETRY [LARGE SCALE ANALYSIS]</scope>
</reference>
<reference key="18">
    <citation type="journal article" date="2009" name="Science">
        <title>Global analysis of Cdk1 substrate phosphorylation sites provides insights into evolution.</title>
        <authorList>
            <person name="Holt L.J."/>
            <person name="Tuch B.B."/>
            <person name="Villen J."/>
            <person name="Johnson A.D."/>
            <person name="Gygi S.P."/>
            <person name="Morgan D.O."/>
        </authorList>
    </citation>
    <scope>PHOSPHORYLATION [LARGE SCALE ANALYSIS] AT SER-349; SER-974; SER-977; SER-980; SER-988; SER-992; SER-999 AND THR-1050</scope>
    <scope>IDENTIFICATION BY MASS SPECTROMETRY [LARGE SCALE ANALYSIS]</scope>
</reference>
<reference key="19">
    <citation type="journal article" date="2012" name="Proc. Natl. Acad. Sci. U.S.A.">
        <title>N-terminal acetylome analyses and functional insights of the N-terminal acetyltransferase NatB.</title>
        <authorList>
            <person name="Van Damme P."/>
            <person name="Lasa M."/>
            <person name="Polevoda B."/>
            <person name="Gazquez C."/>
            <person name="Elosegui-Artola A."/>
            <person name="Kim D.S."/>
            <person name="De Juan-Pardo E."/>
            <person name="Demeyer K."/>
            <person name="Hole K."/>
            <person name="Larrea E."/>
            <person name="Timmerman E."/>
            <person name="Prieto J."/>
            <person name="Arnesen T."/>
            <person name="Sherman F."/>
            <person name="Gevaert K."/>
            <person name="Aldabe R."/>
        </authorList>
    </citation>
    <scope>IDENTIFICATION BY MASS SPECTROMETRY [LARGE SCALE ANALYSIS]</scope>
</reference>
<reference key="20">
    <citation type="journal article" date="2001" name="Proc. Natl. Acad. Sci. U.S.A.">
        <title>Structure of the Sec23p/24p and Sec13p/31p complexes of COPII.</title>
        <authorList>
            <person name="Lederkremer G.Z."/>
            <person name="Cheng Y."/>
            <person name="Petre B.M."/>
            <person name="Vogan E."/>
            <person name="Springer S."/>
            <person name="Schekman R.W."/>
            <person name="Walz T."/>
            <person name="Kirchhausen T."/>
        </authorList>
    </citation>
    <scope>ELECTRON MICROSCOPY OF THE SEC13/31 COMPLEX</scope>
</reference>
<reference key="21">
    <citation type="journal article" date="2001" name="Proc. Natl. Acad. Sci. U.S.A.">
        <title>Surface structure of the COPII-coated vesicle.</title>
        <authorList>
            <person name="Matsuoka K."/>
            <person name="Schekman R.W."/>
            <person name="Orci L."/>
            <person name="Heuser J.E."/>
        </authorList>
    </citation>
    <scope>ELECTRON MICROSCOPY OF THE SEC13/31 COMPLEX</scope>
</reference>
<reference key="22">
    <citation type="journal article" date="2002" name="J. Cell Biol.">
        <title>Sec16p potentiates the action of COPII proteins to bud transport vesicles.</title>
        <authorList>
            <person name="Supek F."/>
            <person name="Madden D.T."/>
            <person name="Hamamoto S."/>
            <person name="Orci L."/>
            <person name="Schekman R.W."/>
        </authorList>
    </citation>
    <scope>SUBCELLULAR LOCATION</scope>
</reference>
<reference key="23">
    <citation type="journal article" date="2003" name="EMBO Rep.">
        <title>Self-assembly of minimal COPII cages.</title>
        <authorList>
            <person name="Antonny B."/>
            <person name="Gounon P."/>
            <person name="Schekman R.W."/>
            <person name="Orci L."/>
        </authorList>
    </citation>
    <scope>STRUCTURE OF THE COPII COMPLEX</scope>
</reference>
<reference key="24">
    <citation type="journal article" date="2003" name="Nature">
        <title>Global analysis of protein localization in budding yeast.</title>
        <authorList>
            <person name="Huh W.-K."/>
            <person name="Falvo J.V."/>
            <person name="Gerke L.C."/>
            <person name="Carroll A.S."/>
            <person name="Howson R.W."/>
            <person name="Weissman J.S."/>
            <person name="O'Shea E.K."/>
        </authorList>
    </citation>
    <scope>SUBCELLULAR LOCATION [LARGE SCALE ANALYSIS]</scope>
</reference>
<reference key="25">
    <citation type="journal article" date="2003" name="Nature">
        <title>Global analysis of protein expression in yeast.</title>
        <authorList>
            <person name="Ghaemmaghami S."/>
            <person name="Huh W.-K."/>
            <person name="Bower K."/>
            <person name="Howson R.W."/>
            <person name="Belle A."/>
            <person name="Dephoure N."/>
            <person name="O'Shea E.K."/>
            <person name="Weissman J.S."/>
        </authorList>
    </citation>
    <scope>LEVEL OF PROTEIN EXPRESSION [LARGE SCALE ANALYSIS]</scope>
</reference>
<reference key="26">
    <citation type="journal article" date="2004" name="J. Biol. Chem.">
        <title>Reconstitution of coat protein complex II (COPII) vesicle formation from cargo-reconstituted proteoliposomes reveals the potential role of GTP hydrolysis by Sar1p in protein sorting.</title>
        <authorList>
            <person name="Sato K."/>
            <person name="Nakano A."/>
        </authorList>
    </citation>
    <scope>COPII COMPLEX ASSEMBLY</scope>
    <scope>FUNCTION OF THE COPII COMPLEX</scope>
</reference>
<reference key="27">
    <citation type="journal article" date="2007" name="Cell">
        <title>Structure and organization of coat proteins in the COPII cage.</title>
        <authorList>
            <person name="Fath S."/>
            <person name="Mancias J.D."/>
            <person name="Bi X."/>
            <person name="Goldberg J."/>
        </authorList>
    </citation>
    <scope>X-RAY CRYSTALLOGRAPHY (2.35 ANGSTROMS) OF 1-763 IN COMPLEX WITH SEC13</scope>
    <scope>SUBUNIT</scope>
</reference>
<reference key="28">
    <citation type="journal article" date="2007" name="Dev. Cell">
        <title>Insights into COPII coat nucleation from the structure of Sec23.Sar1 complexed with the active fragment of Sec31.</title>
        <authorList>
            <person name="Bi X."/>
            <person name="Mancias J.D."/>
            <person name="Goldberg J."/>
        </authorList>
    </citation>
    <scope>X-RAY CRYSTALLOGRAPHY (2.50 ANGSTROMS) OF 899-947 IN COMPLEX WITH SEC23 AND SAR1</scope>
</reference>
<reference key="29">
    <citation type="journal article" date="2010" name="J. Cell Biol.">
        <title>Structure of the Sec13-Sec16 edge element, a template for assembly of the COPII vesicle coat.</title>
        <authorList>
            <person name="Whittle J.R."/>
            <person name="Schwartz T.U."/>
        </authorList>
    </citation>
    <scope>X-RAY CRYSTALLOGRAPHY (2.80 ANGSTROMS) OF 370-746 IN COMPLEX WITH SEC13</scope>
</reference>
<gene>
    <name type="primary">SEC31</name>
    <name type="synonym">WEB1</name>
    <name type="ordered locus">YDL195W</name>
    <name type="ORF">D1229</name>
</gene>
<sequence length="1273" mass="138717">MVKLAEFSRTATFAWSHDKIPLLVSGTVSGTVDANFSTDSSLELWSLLAADSEKPIASLQVDSKFNDLDWSHNNKIIAGALDNGSLELYSTNEANNAINSMARFSNHSSSVKTVKFNAKQDNVLASGGNNGEIFIWDMNKCTESPSNYTPLTPGQSMSSVDEVISLAWNQSLAHVFASAGSSNFASIWDLKAKKEVIHLSYTSPNSGIKQQLSVVEWHPKNSTRVATATGSDNDPSILIWDLRNANTPLQTLNQGHQKGILSLDWCHQDEHLLLSSGRDNTVLLWNPESAEQLSQFPARGNWCFKTKFAPEAPDLFACASFDNKIEVQTLQNLTNTLDEQETETKQQESETDFWNNVSREESKEKPTVFHLQAPTWYGEPSPAAHWAFGGKLVQITPDGKGVSITNPKISGLESNTTLSEALKTKDFKPLINQRLVKVIDDVNEEDWNLLEKLSMDGTEEFLKEALAFDNDESDAQDDANNEKEDDGEEFFQQIETNFQPEGDFSLSGNIEQTISKNLVSGNIKSAVKNSLENDLLMEAMVIALDSNNERLKESVKNAYFAKYGSKSSLSRILYSISKREVDDLVENLDVSQWKFISKAIQNLYPNDIAQRNEMLIKLGDRLKENGHRQDSLTLYLAAGSLDKVASIWLSEFPDLEDKLKKDNKTIYEAHSECLTEFIERFTVFSNFINGSSTINNEQLIAKFLEFINLTTSTGNFELATEFLNSLPSDNEEVKTEKARVLIASGKSLPAQNPATATTSKAKYTNAKTNKNVPVLPTPGMPSTTSIPSMQAPFYGMTPGASANALPPKPYVPATTTSAPVHTEGKYAPPSQPSMASPFVNKTNSSTRLNSFAPPPNPYATATVPATNVSTTSIPQNTFAPIQPGMPIMGDYNAQSSSIPSQPPINAVSGQTPHLNRKANDGWNDLPLKVKEKPSRAKAVSVAPPNILSTPTPLNGIPANAASTMPPPPLSRAPSSVSMVSPPPLHKNSRVPSLVATSESPRASISNPYAPPQSSQQFPIGTISTANQTSNTAQVASSNPYAPPPQQRVATPLSGGVPPAPLPKASNPYAPTATTQPNGSSYPPTGPYTNNHTMTSPPPVFNKPPTGPPPISMKKRSNKLASIEQNPSQGATYPPTLSSSASPLQPSQPPTLASQVNTSAENVSHEIPADQQPIVDFLKEELARVTPLTPKEYSKQLKDCDKRLKILFYHLEKQDLLTQPTIDCLHDLVALMKEKKYKEAMVIHANIATNHAQEGGNWLTGVKRLIGIAEATLN</sequence>
<name>SEC31_YEAST</name>
<protein>
    <recommendedName>
        <fullName>Protein transport protein SEC31</fullName>
    </recommendedName>
    <alternativeName>
        <fullName>Protein WEB1</fullName>
    </alternativeName>
</protein>
<evidence type="ECO:0000256" key="1">
    <source>
        <dbReference type="SAM" id="MobiDB-lite"/>
    </source>
</evidence>
<evidence type="ECO:0000269" key="2">
    <source>
    </source>
</evidence>
<evidence type="ECO:0000269" key="3">
    <source>
    </source>
</evidence>
<evidence type="ECO:0000269" key="4">
    <source>
    </source>
</evidence>
<evidence type="ECO:0000269" key="5">
    <source>
    </source>
</evidence>
<evidence type="ECO:0000269" key="6">
    <source>
    </source>
</evidence>
<evidence type="ECO:0000269" key="7">
    <source>
    </source>
</evidence>
<evidence type="ECO:0000269" key="8">
    <source>
    </source>
</evidence>
<evidence type="ECO:0000269" key="9">
    <source>
    </source>
</evidence>
<evidence type="ECO:0000269" key="10">
    <source>
    </source>
</evidence>
<evidence type="ECO:0000269" key="11">
    <source>
    </source>
</evidence>
<evidence type="ECO:0000269" key="12">
    <source>
    </source>
</evidence>
<evidence type="ECO:0000269" key="13">
    <source>
    </source>
</evidence>
<evidence type="ECO:0000269" key="14">
    <source>
    </source>
</evidence>
<evidence type="ECO:0000269" key="15">
    <source>
    </source>
</evidence>
<evidence type="ECO:0000269" key="16">
    <source>
    </source>
</evidence>
<evidence type="ECO:0000305" key="17"/>
<evidence type="ECO:0007744" key="18">
    <source>
    </source>
</evidence>
<evidence type="ECO:0007744" key="19">
    <source>
    </source>
</evidence>
<evidence type="ECO:0007744" key="20">
    <source>
    </source>
</evidence>
<evidence type="ECO:0007744" key="21">
    <source>
    </source>
</evidence>
<evidence type="ECO:0007829" key="22">
    <source>
        <dbReference type="PDB" id="2PM7"/>
    </source>
</evidence>
<evidence type="ECO:0007829" key="23">
    <source>
        <dbReference type="PDB" id="2PM9"/>
    </source>
</evidence>
<evidence type="ECO:0007829" key="24">
    <source>
        <dbReference type="PDB" id="2QTV"/>
    </source>
</evidence>